<organism>
    <name type="scientific">Emericella variicolor</name>
    <name type="common">Aspergillus stellatus</name>
    <dbReference type="NCBI Taxonomy" id="1549217"/>
    <lineage>
        <taxon>Eukaryota</taxon>
        <taxon>Fungi</taxon>
        <taxon>Dikarya</taxon>
        <taxon>Ascomycota</taxon>
        <taxon>Pezizomycotina</taxon>
        <taxon>Eurotiomycetes</taxon>
        <taxon>Eurotiomycetidae</taxon>
        <taxon>Eurotiales</taxon>
        <taxon>Aspergillaceae</taxon>
        <taxon>Aspergillus</taxon>
        <taxon>Aspergillus subgen. Nidulantes</taxon>
    </lineage>
</organism>
<gene>
    <name evidence="5" type="primary">oblE</name>
</gene>
<reference key="1">
    <citation type="journal article" date="2016" name="Org. Lett.">
        <title>Multiple oxidative modifications in the ophiobolin biosynthesis: P450 oxidations found in genome mining.</title>
        <authorList>
            <person name="Narita K."/>
            <person name="Chiba R."/>
            <person name="Minami A."/>
            <person name="Kodama M."/>
            <person name="Fujii I."/>
            <person name="Gomi K."/>
            <person name="Oikawa H."/>
        </authorList>
    </citation>
    <scope>NUCLEOTIDE SEQUENCE [GENOMIC DNA]</scope>
    <scope>FUNCTION</scope>
    <source>
        <strain>GF10</strain>
    </source>
</reference>
<dbReference type="EC" id="1.-.-.-" evidence="7"/>
<dbReference type="EMBL" id="LC127211">
    <property type="protein sequence ID" value="BAX09280.1"/>
    <property type="molecule type" value="Genomic_DNA"/>
</dbReference>
<dbReference type="SMR" id="A0A1V1FNZ5"/>
<dbReference type="UniPathway" id="UPA00213"/>
<dbReference type="GO" id="GO:0016020">
    <property type="term" value="C:membrane"/>
    <property type="evidence" value="ECO:0007669"/>
    <property type="project" value="UniProtKB-SubCell"/>
</dbReference>
<dbReference type="GO" id="GO:0020037">
    <property type="term" value="F:heme binding"/>
    <property type="evidence" value="ECO:0007669"/>
    <property type="project" value="InterPro"/>
</dbReference>
<dbReference type="GO" id="GO:0005506">
    <property type="term" value="F:iron ion binding"/>
    <property type="evidence" value="ECO:0007669"/>
    <property type="project" value="InterPro"/>
</dbReference>
<dbReference type="GO" id="GO:0004497">
    <property type="term" value="F:monooxygenase activity"/>
    <property type="evidence" value="ECO:0007669"/>
    <property type="project" value="UniProtKB-KW"/>
</dbReference>
<dbReference type="GO" id="GO:0016705">
    <property type="term" value="F:oxidoreductase activity, acting on paired donors, with incorporation or reduction of molecular oxygen"/>
    <property type="evidence" value="ECO:0007669"/>
    <property type="project" value="InterPro"/>
</dbReference>
<dbReference type="GO" id="GO:0016125">
    <property type="term" value="P:sterol metabolic process"/>
    <property type="evidence" value="ECO:0007669"/>
    <property type="project" value="TreeGrafter"/>
</dbReference>
<dbReference type="GO" id="GO:0016114">
    <property type="term" value="P:terpenoid biosynthetic process"/>
    <property type="evidence" value="ECO:0007669"/>
    <property type="project" value="UniProtKB-UniPathway"/>
</dbReference>
<dbReference type="FunFam" id="1.10.630.10:FF:000021">
    <property type="entry name" value="Cytochrome P450 61"/>
    <property type="match status" value="1"/>
</dbReference>
<dbReference type="Gene3D" id="1.10.630.10">
    <property type="entry name" value="Cytochrome P450"/>
    <property type="match status" value="1"/>
</dbReference>
<dbReference type="InterPro" id="IPR001128">
    <property type="entry name" value="Cyt_P450"/>
</dbReference>
<dbReference type="InterPro" id="IPR002397">
    <property type="entry name" value="Cyt_P450_B"/>
</dbReference>
<dbReference type="InterPro" id="IPR017972">
    <property type="entry name" value="Cyt_P450_CS"/>
</dbReference>
<dbReference type="InterPro" id="IPR036396">
    <property type="entry name" value="Cyt_P450_sf"/>
</dbReference>
<dbReference type="PANTHER" id="PTHR24286:SF228">
    <property type="entry name" value="C-22 STEROL DESATURASE ERG5"/>
    <property type="match status" value="1"/>
</dbReference>
<dbReference type="PANTHER" id="PTHR24286">
    <property type="entry name" value="CYTOCHROME P450 26"/>
    <property type="match status" value="1"/>
</dbReference>
<dbReference type="Pfam" id="PF00067">
    <property type="entry name" value="p450"/>
    <property type="match status" value="1"/>
</dbReference>
<dbReference type="PRINTS" id="PR00359">
    <property type="entry name" value="BP450"/>
</dbReference>
<dbReference type="SUPFAM" id="SSF48264">
    <property type="entry name" value="Cytochrome P450"/>
    <property type="match status" value="1"/>
</dbReference>
<dbReference type="PROSITE" id="PS00086">
    <property type="entry name" value="CYTOCHROME_P450"/>
    <property type="match status" value="1"/>
</dbReference>
<comment type="function">
    <text evidence="1 4 7">Cytochrome P450 monooxygenase; part of the gene cluster that mediates the biosynthesis of the sesterterpenes ophiobolins, fungal phytotoxins with potential anti-cancer activities (PubMed:27116000). The first step of the pathway is performed by the sesterterpene synthase oblA that possesses both prenyl transferase and terpene cyclase activity, converting isopentenyl diphosphate and dimethylallyl diphosphate into geranylfarnesyl diphosphate (GFPP) and further converting GFPP into ophiobolin F, respectively (By similarity). Other sesterterpenoids (C(25) terpenoids) are found as minor products of oblA (By similarity). The cytochrome P450 monooxygenase oblB then catalyzes a four-step oxidative transformation of ophiobolin F to yield ophiobolin C (PubMed:27116000). The function of the cytochrome P450 monooxygenase oblE has still to be determined (Probable).</text>
</comment>
<comment type="cofactor">
    <cofactor evidence="2">
        <name>heme</name>
        <dbReference type="ChEBI" id="CHEBI:30413"/>
    </cofactor>
</comment>
<comment type="pathway">
    <text evidence="7">Secondary metabolite biosynthesis; terpenoid biosynthesis.</text>
</comment>
<comment type="subcellular location">
    <subcellularLocation>
        <location evidence="3">Membrane</location>
        <topology evidence="3">Single-pass membrane protein</topology>
    </subcellularLocation>
</comment>
<comment type="similarity">
    <text evidence="6">Belongs to the cytochrome P450 family.</text>
</comment>
<feature type="chain" id="PRO_0000451172" description="Cytochrome P450 monooxygenase oblE">
    <location>
        <begin position="1"/>
        <end position="529"/>
    </location>
</feature>
<feature type="transmembrane region" description="Helical" evidence="3">
    <location>
        <begin position="38"/>
        <end position="58"/>
    </location>
</feature>
<feature type="binding site" description="axial binding residue" evidence="2">
    <location>
        <position position="477"/>
    </location>
    <ligand>
        <name>heme</name>
        <dbReference type="ChEBI" id="CHEBI:30413"/>
    </ligand>
    <ligandPart>
        <name>Fe</name>
        <dbReference type="ChEBI" id="CHEBI:18248"/>
    </ligandPart>
</feature>
<protein>
    <recommendedName>
        <fullName evidence="5">Cytochrome P450 monooxygenase oblE</fullName>
        <ecNumber evidence="7">1.-.-.-</ecNumber>
    </recommendedName>
    <alternativeName>
        <fullName evidence="5">Ophiobolin biosynthesis cluster protein E</fullName>
    </alternativeName>
</protein>
<keyword id="KW-0349">Heme</keyword>
<keyword id="KW-0408">Iron</keyword>
<keyword id="KW-0472">Membrane</keyword>
<keyword id="KW-0479">Metal-binding</keyword>
<keyword id="KW-0503">Monooxygenase</keyword>
<keyword id="KW-0560">Oxidoreductase</keyword>
<keyword id="KW-0812">Transmembrane</keyword>
<keyword id="KW-1133">Transmembrane helix</keyword>
<accession>A0A1V1FNZ5</accession>
<sequence length="529" mass="59856">MDSQFLSVSRPQLDVSAWTPQKWFVQGALRSFEEWSAWQYIVTLLIAIITYDQVMYIWRKASIAGPAFKIPLMGPFLQALHPRFESYLEQWASGPLSCVSIFHKFVVLASDRDLAHKVFKSPTYAEPCIVPIAKDILGHKAWVFLQGKAHAEYRRGLTPLFTNKAMETYLPAQERVCADYFDKFVAASAANNGQPREFMTLFREINCALSLRTFFGDYISQDAVKKIADDFYLATAALELVNVPLSMYIPGTKPWRGKRTADAVHAEFARCAAACKANMATGSEPTCIVDHWVLHMMESSRYHARVAAGEEGVEKPTNVIREFSNQEISETLFTFLFASQDASSSATTWLFQILAQRPDVLSRLREENLAARNGDRFKPFDLPMLESLPYTTAVIKELLRHRPPVIFVPYLATKPFPITPSYTVPKNSMIIPSCYPALHDPEAYPNPEVFDPDRWITGDAEKQTKNWLVFGAGPHDCLARRYVPLSMAGMIGKAALELDWVHHPTERSEEIRVFATLFPMDGCQLVFSK</sequence>
<evidence type="ECO:0000250" key="1">
    <source>
        <dbReference type="UniProtKB" id="A1C8C3"/>
    </source>
</evidence>
<evidence type="ECO:0000250" key="2">
    <source>
        <dbReference type="UniProtKB" id="P04798"/>
    </source>
</evidence>
<evidence type="ECO:0000255" key="3"/>
<evidence type="ECO:0000269" key="4">
    <source>
    </source>
</evidence>
<evidence type="ECO:0000303" key="5">
    <source>
    </source>
</evidence>
<evidence type="ECO:0000305" key="6"/>
<evidence type="ECO:0000305" key="7">
    <source>
    </source>
</evidence>
<name>OBLE_EMEVA</name>
<proteinExistence type="inferred from homology"/>